<evidence type="ECO:0000250" key="1">
    <source>
        <dbReference type="UniProtKB" id="P61585"/>
    </source>
</evidence>
<evidence type="ECO:0000250" key="2">
    <source>
        <dbReference type="UniProtKB" id="P63000"/>
    </source>
</evidence>
<evidence type="ECO:0000250" key="3">
    <source>
        <dbReference type="UniProtKB" id="Q24816"/>
    </source>
</evidence>
<evidence type="ECO:0000303" key="4">
    <source>
    </source>
</evidence>
<evidence type="ECO:0000305" key="5"/>
<evidence type="ECO:0000312" key="6">
    <source>
        <dbReference type="EMBL" id="AAC47299.1"/>
    </source>
</evidence>
<evidence type="ECO:0000312" key="7">
    <source>
        <dbReference type="EMBL" id="EAL50800.1"/>
    </source>
</evidence>
<reference evidence="7" key="1">
    <citation type="journal article" date="2005" name="Nature">
        <title>The genome of the protist parasite Entamoeba histolytica.</title>
        <authorList>
            <person name="Loftus B.J."/>
            <person name="Anderson I."/>
            <person name="Davies R."/>
            <person name="Alsmark U.C."/>
            <person name="Samuelson J."/>
            <person name="Amedeo P."/>
            <person name="Roncaglia P."/>
            <person name="Berriman M."/>
            <person name="Hirt R.P."/>
            <person name="Mann B.J."/>
            <person name="Nozaki T."/>
            <person name="Suh B."/>
            <person name="Pop M."/>
            <person name="Duchene M."/>
            <person name="Ackers J."/>
            <person name="Tannich E."/>
            <person name="Leippe M."/>
            <person name="Hofer M."/>
            <person name="Bruchhaus I."/>
            <person name="Willhoeft U."/>
            <person name="Bhattacharya A."/>
            <person name="Chillingworth T."/>
            <person name="Churcher C.M."/>
            <person name="Hance Z."/>
            <person name="Harris B."/>
            <person name="Harris D."/>
            <person name="Jagels K."/>
            <person name="Moule S."/>
            <person name="Mungall K.L."/>
            <person name="Ormond D."/>
            <person name="Squares R."/>
            <person name="Whitehead S."/>
            <person name="Quail M.A."/>
            <person name="Rabbinowitsch E."/>
            <person name="Norbertczak H."/>
            <person name="Price C."/>
            <person name="Wang Z."/>
            <person name="Guillen N."/>
            <person name="Gilchrist C."/>
            <person name="Stroup S.E."/>
            <person name="Bhattacharya S."/>
            <person name="Lohia A."/>
            <person name="Foster P.G."/>
            <person name="Sicheritz-Ponten T."/>
            <person name="Weber C."/>
            <person name="Singh U."/>
            <person name="Mukherjee C."/>
            <person name="El-Sayed N.M.A."/>
            <person name="Petri W.A."/>
            <person name="Clark C.G."/>
            <person name="Embley T.M."/>
            <person name="Barrell B.G."/>
            <person name="Fraser C.M."/>
            <person name="Hall N."/>
        </authorList>
    </citation>
    <scope>NUCLEOTIDE SEQUENCE [LARGE SCALE GENOMIC DNA]</scope>
    <source>
        <strain evidence="7">ATCC 30459 / HM-1:IMSS / ABRM</strain>
    </source>
</reference>
<reference evidence="6" key="2">
    <citation type="journal article" date="1996" name="Gene">
        <title>Heterogeneity of Entamoeba histolytica rac genes encoding p21rac homologues.</title>
        <authorList>
            <person name="Lohia A."/>
            <person name="Samuelson J."/>
        </authorList>
    </citation>
    <scope>NUCLEOTIDE SEQUENCE [MRNA] OF 3-200</scope>
    <source>
        <strain evidence="6">ATCC 30459 / HM-1:IMSS / ABRM</strain>
    </source>
</reference>
<comment type="function">
    <text evidence="2">Small GTPase which cycles between active GTP-bound and inactive GDP-bound states.</text>
</comment>
<comment type="catalytic activity">
    <reaction evidence="2">
        <text>GTP + H2O = GDP + phosphate + H(+)</text>
        <dbReference type="Rhea" id="RHEA:19669"/>
        <dbReference type="ChEBI" id="CHEBI:15377"/>
        <dbReference type="ChEBI" id="CHEBI:15378"/>
        <dbReference type="ChEBI" id="CHEBI:37565"/>
        <dbReference type="ChEBI" id="CHEBI:43474"/>
        <dbReference type="ChEBI" id="CHEBI:58189"/>
        <dbReference type="EC" id="3.6.5.2"/>
    </reaction>
    <physiologicalReaction direction="left-to-right" evidence="2">
        <dbReference type="Rhea" id="RHEA:19670"/>
    </physiologicalReaction>
</comment>
<comment type="cofactor">
    <cofactor evidence="3">
        <name>Mg(2+)</name>
        <dbReference type="ChEBI" id="CHEBI:18420"/>
    </cofactor>
</comment>
<comment type="activity regulation">
    <text evidence="2">Regulated by guanine nucleotide exchange factors (GEFs) which promote the exchange of bound GDP for free GTP, GTPase activating proteins (GAPs) which increase the GTP hydrolysis activity, and GDP dissociation inhibitors which inhibit the dissociation of the nucleotide from the GTPase.</text>
</comment>
<comment type="subcellular location">
    <subcellularLocation>
        <location evidence="2">Cell membrane</location>
        <topology evidence="2">Lipid-anchor</topology>
        <orientation evidence="2">Cytoplasmic side</orientation>
    </subcellularLocation>
    <subcellularLocation>
        <location evidence="2">Cytoplasm</location>
        <location evidence="2">Cytoskeleton</location>
    </subcellularLocation>
    <subcellularLocation>
        <location evidence="2">Cytoplasm</location>
    </subcellularLocation>
</comment>
<comment type="domain">
    <text evidence="3">The switch 1 and switch 2 motifs undergo large conformational changes during GTP/GDP cycle and play important roles in the interaction with downstream effectors.</text>
</comment>
<comment type="similarity">
    <text evidence="5">Belongs to the small GTPase superfamily. Rho family.</text>
</comment>
<protein>
    <recommendedName>
        <fullName>Rho-related protein racD</fullName>
        <ecNumber evidence="2">3.6.5.2</ecNumber>
    </recommendedName>
</protein>
<gene>
    <name evidence="4" type="primary">RACD</name>
    <name evidence="7" type="ORF">EHI_012240</name>
</gene>
<proteinExistence type="evidence at transcript level"/>
<dbReference type="EC" id="3.6.5.2" evidence="2"/>
<dbReference type="EMBL" id="DS571148">
    <property type="protein sequence ID" value="EAL50800.1"/>
    <property type="molecule type" value="Genomic_DNA"/>
</dbReference>
<dbReference type="EMBL" id="U30148">
    <property type="protein sequence ID" value="AAC47299.1"/>
    <property type="molecule type" value="mRNA"/>
</dbReference>
<dbReference type="PIR" id="PC4201">
    <property type="entry name" value="PC4201"/>
</dbReference>
<dbReference type="RefSeq" id="XP_656184.1">
    <property type="nucleotide sequence ID" value="XM_651092.2"/>
</dbReference>
<dbReference type="SMR" id="Q24817"/>
<dbReference type="STRING" id="5759.C4LTL7"/>
<dbReference type="EnsemblProtists" id="GAT91910">
    <property type="protein sequence ID" value="GAT91910"/>
    <property type="gene ID" value="CL6EHI_012240"/>
</dbReference>
<dbReference type="EnsemblProtists" id="rna_EHI_012240-1">
    <property type="protein sequence ID" value="rna_EHI_012240-1"/>
    <property type="gene ID" value="EHI_012240"/>
</dbReference>
<dbReference type="GeneID" id="3410500"/>
<dbReference type="KEGG" id="ehi:EHI_012240"/>
<dbReference type="VEuPathDB" id="AmoebaDB:EHI5A_020530"/>
<dbReference type="VEuPathDB" id="AmoebaDB:EHI7A_026510"/>
<dbReference type="VEuPathDB" id="AmoebaDB:EHI7A_027950"/>
<dbReference type="VEuPathDB" id="AmoebaDB:EHI8A_024990"/>
<dbReference type="VEuPathDB" id="AmoebaDB:EHI8A_058280"/>
<dbReference type="VEuPathDB" id="AmoebaDB:EHI_012240"/>
<dbReference type="VEuPathDB" id="AmoebaDB:KM1_052920"/>
<dbReference type="VEuPathDB" id="AmoebaDB:KM1_058210"/>
<dbReference type="eggNOG" id="KOG0393">
    <property type="taxonomic scope" value="Eukaryota"/>
</dbReference>
<dbReference type="HOGENOM" id="CLU_041217_21_2_1"/>
<dbReference type="OMA" id="DNVASKW"/>
<dbReference type="OrthoDB" id="8830751at2759"/>
<dbReference type="Proteomes" id="UP000001926">
    <property type="component" value="Partially assembled WGS sequence"/>
</dbReference>
<dbReference type="GO" id="GO:0042995">
    <property type="term" value="C:cell projection"/>
    <property type="evidence" value="ECO:0000318"/>
    <property type="project" value="GO_Central"/>
</dbReference>
<dbReference type="GO" id="GO:0031410">
    <property type="term" value="C:cytoplasmic vesicle"/>
    <property type="evidence" value="ECO:0000318"/>
    <property type="project" value="GO_Central"/>
</dbReference>
<dbReference type="GO" id="GO:0005856">
    <property type="term" value="C:cytoskeleton"/>
    <property type="evidence" value="ECO:0000318"/>
    <property type="project" value="GO_Central"/>
</dbReference>
<dbReference type="GO" id="GO:0005886">
    <property type="term" value="C:plasma membrane"/>
    <property type="evidence" value="ECO:0000318"/>
    <property type="project" value="GO_Central"/>
</dbReference>
<dbReference type="GO" id="GO:0005525">
    <property type="term" value="F:GTP binding"/>
    <property type="evidence" value="ECO:0000318"/>
    <property type="project" value="GO_Central"/>
</dbReference>
<dbReference type="GO" id="GO:0003924">
    <property type="term" value="F:GTPase activity"/>
    <property type="evidence" value="ECO:0000318"/>
    <property type="project" value="GO_Central"/>
</dbReference>
<dbReference type="GO" id="GO:0046872">
    <property type="term" value="F:metal ion binding"/>
    <property type="evidence" value="ECO:0007669"/>
    <property type="project" value="UniProtKB-KW"/>
</dbReference>
<dbReference type="GO" id="GO:0019901">
    <property type="term" value="F:protein kinase binding"/>
    <property type="evidence" value="ECO:0000318"/>
    <property type="project" value="GO_Central"/>
</dbReference>
<dbReference type="GO" id="GO:0007015">
    <property type="term" value="P:actin filament organization"/>
    <property type="evidence" value="ECO:0000318"/>
    <property type="project" value="GO_Central"/>
</dbReference>
<dbReference type="GO" id="GO:0030865">
    <property type="term" value="P:cortical cytoskeleton organization"/>
    <property type="evidence" value="ECO:0000318"/>
    <property type="project" value="GO_Central"/>
</dbReference>
<dbReference type="GO" id="GO:0007163">
    <property type="term" value="P:establishment or maintenance of cell polarity"/>
    <property type="evidence" value="ECO:0000318"/>
    <property type="project" value="GO_Central"/>
</dbReference>
<dbReference type="GO" id="GO:0000281">
    <property type="term" value="P:mitotic cytokinesis"/>
    <property type="evidence" value="ECO:0000318"/>
    <property type="project" value="GO_Central"/>
</dbReference>
<dbReference type="GO" id="GO:0032956">
    <property type="term" value="P:regulation of actin cytoskeleton organization"/>
    <property type="evidence" value="ECO:0000318"/>
    <property type="project" value="GO_Central"/>
</dbReference>
<dbReference type="GO" id="GO:0008360">
    <property type="term" value="P:regulation of cell shape"/>
    <property type="evidence" value="ECO:0000318"/>
    <property type="project" value="GO_Central"/>
</dbReference>
<dbReference type="GO" id="GO:0007165">
    <property type="term" value="P:signal transduction"/>
    <property type="evidence" value="ECO:0000318"/>
    <property type="project" value="GO_Central"/>
</dbReference>
<dbReference type="GO" id="GO:0007264">
    <property type="term" value="P:small GTPase-mediated signal transduction"/>
    <property type="evidence" value="ECO:0007669"/>
    <property type="project" value="InterPro"/>
</dbReference>
<dbReference type="CDD" id="cd00157">
    <property type="entry name" value="Rho"/>
    <property type="match status" value="1"/>
</dbReference>
<dbReference type="FunFam" id="3.40.50.300:FF:000118">
    <property type="entry name" value="Rho-related GTP-binding protein RhoG"/>
    <property type="match status" value="1"/>
</dbReference>
<dbReference type="Gene3D" id="3.40.50.300">
    <property type="entry name" value="P-loop containing nucleotide triphosphate hydrolases"/>
    <property type="match status" value="1"/>
</dbReference>
<dbReference type="InterPro" id="IPR027417">
    <property type="entry name" value="P-loop_NTPase"/>
</dbReference>
<dbReference type="InterPro" id="IPR005225">
    <property type="entry name" value="Small_GTP-bd"/>
</dbReference>
<dbReference type="InterPro" id="IPR001806">
    <property type="entry name" value="Small_GTPase"/>
</dbReference>
<dbReference type="InterPro" id="IPR003578">
    <property type="entry name" value="Small_GTPase_Rho"/>
</dbReference>
<dbReference type="NCBIfam" id="TIGR00231">
    <property type="entry name" value="small_GTP"/>
    <property type="match status" value="1"/>
</dbReference>
<dbReference type="PANTHER" id="PTHR24072">
    <property type="entry name" value="RHO FAMILY GTPASE"/>
    <property type="match status" value="1"/>
</dbReference>
<dbReference type="Pfam" id="PF00071">
    <property type="entry name" value="Ras"/>
    <property type="match status" value="1"/>
</dbReference>
<dbReference type="PRINTS" id="PR00449">
    <property type="entry name" value="RASTRNSFRMNG"/>
</dbReference>
<dbReference type="SMART" id="SM00175">
    <property type="entry name" value="RAB"/>
    <property type="match status" value="1"/>
</dbReference>
<dbReference type="SMART" id="SM00173">
    <property type="entry name" value="RAS"/>
    <property type="match status" value="1"/>
</dbReference>
<dbReference type="SMART" id="SM00174">
    <property type="entry name" value="RHO"/>
    <property type="match status" value="1"/>
</dbReference>
<dbReference type="SUPFAM" id="SSF52540">
    <property type="entry name" value="P-loop containing nucleoside triphosphate hydrolases"/>
    <property type="match status" value="1"/>
</dbReference>
<dbReference type="PROSITE" id="PS51420">
    <property type="entry name" value="RHO"/>
    <property type="match status" value="1"/>
</dbReference>
<organism evidence="7">
    <name type="scientific">Entamoeba histolytica (strain ATCC 30459 / HM-1:IMSS / ABRM)</name>
    <dbReference type="NCBI Taxonomy" id="294381"/>
    <lineage>
        <taxon>Eukaryota</taxon>
        <taxon>Amoebozoa</taxon>
        <taxon>Evosea</taxon>
        <taxon>Archamoebae</taxon>
        <taxon>Mastigamoebida</taxon>
        <taxon>Entamoebidae</taxon>
        <taxon>Entamoeba</taxon>
    </lineage>
</organism>
<keyword id="KW-1003">Cell membrane</keyword>
<keyword id="KW-0963">Cytoplasm</keyword>
<keyword id="KW-0206">Cytoskeleton</keyword>
<keyword id="KW-0342">GTP-binding</keyword>
<keyword id="KW-0378">Hydrolase</keyword>
<keyword id="KW-0449">Lipoprotein</keyword>
<keyword id="KW-0460">Magnesium</keyword>
<keyword id="KW-0472">Membrane</keyword>
<keyword id="KW-0479">Metal-binding</keyword>
<keyword id="KW-0488">Methylation</keyword>
<keyword id="KW-0547">Nucleotide-binding</keyword>
<keyword id="KW-0636">Prenylation</keyword>
<keyword id="KW-1185">Reference proteome</keyword>
<name>RACD_ENTH1</name>
<accession>Q24817</accession>
<accession>A0A175JE05</accession>
<accession>C4LTL7</accession>
<feature type="chain" id="PRO_0000198913" description="Rho-related protein racD">
    <location>
        <begin position="1"/>
        <end position="197"/>
    </location>
</feature>
<feature type="propeptide" id="PRO_0000281290" description="Removed in mature form" evidence="2">
    <location>
        <begin position="198"/>
        <end position="200"/>
    </location>
</feature>
<feature type="short sequence motif" description="Switch 1" evidence="3">
    <location>
        <begin position="33"/>
        <end position="44"/>
    </location>
</feature>
<feature type="short sequence motif" description="Switch 2" evidence="3">
    <location>
        <begin position="64"/>
        <end position="82"/>
    </location>
</feature>
<feature type="binding site" evidence="3">
    <location>
        <position position="20"/>
    </location>
    <ligand>
        <name>GTP</name>
        <dbReference type="ChEBI" id="CHEBI:37565"/>
    </ligand>
</feature>
<feature type="binding site" evidence="3">
    <location>
        <position position="22"/>
    </location>
    <ligand>
        <name>GTP</name>
        <dbReference type="ChEBI" id="CHEBI:37565"/>
    </ligand>
</feature>
<feature type="binding site" evidence="3">
    <location>
        <position position="23"/>
    </location>
    <ligand>
        <name>GTP</name>
        <dbReference type="ChEBI" id="CHEBI:37565"/>
    </ligand>
</feature>
<feature type="binding site" evidence="3">
    <location>
        <position position="24"/>
    </location>
    <ligand>
        <name>GTP</name>
        <dbReference type="ChEBI" id="CHEBI:37565"/>
    </ligand>
</feature>
<feature type="binding site" evidence="3">
    <location>
        <position position="24"/>
    </location>
    <ligand>
        <name>Mg(2+)</name>
        <dbReference type="ChEBI" id="CHEBI:18420"/>
    </ligand>
</feature>
<feature type="binding site" evidence="3">
    <location>
        <position position="25"/>
    </location>
    <ligand>
        <name>GTP</name>
        <dbReference type="ChEBI" id="CHEBI:37565"/>
    </ligand>
</feature>
<feature type="binding site" evidence="3">
    <location>
        <position position="39"/>
    </location>
    <ligand>
        <name>GTP</name>
        <dbReference type="ChEBI" id="CHEBI:37565"/>
    </ligand>
</feature>
<feature type="binding site" evidence="3">
    <location>
        <position position="42"/>
    </location>
    <ligand>
        <name>GTP</name>
        <dbReference type="ChEBI" id="CHEBI:37565"/>
    </ligand>
</feature>
<feature type="binding site" evidence="3">
    <location>
        <position position="42"/>
    </location>
    <ligand>
        <name>Mg(2+)</name>
        <dbReference type="ChEBI" id="CHEBI:18420"/>
    </ligand>
</feature>
<feature type="binding site" evidence="3">
    <location>
        <position position="123"/>
    </location>
    <ligand>
        <name>GTP</name>
        <dbReference type="ChEBI" id="CHEBI:37565"/>
    </ligand>
</feature>
<feature type="binding site" evidence="3">
    <location>
        <position position="125"/>
    </location>
    <ligand>
        <name>GTP</name>
        <dbReference type="ChEBI" id="CHEBI:37565"/>
    </ligand>
</feature>
<feature type="binding site" evidence="3">
    <location>
        <position position="166"/>
    </location>
    <ligand>
        <name>GTP</name>
        <dbReference type="ChEBI" id="CHEBI:37565"/>
    </ligand>
</feature>
<feature type="modified residue" description="Cysteine methyl ester" evidence="1">
    <location>
        <position position="197"/>
    </location>
</feature>
<feature type="lipid moiety-binding region" description="S-geranylgeranyl cysteine" evidence="2">
    <location>
        <position position="197"/>
    </location>
</feature>
<feature type="sequence conflict" description="In Ref. 2; AAC47299." evidence="5" ref="2">
    <original>A</original>
    <variation>S</variation>
    <location>
        <position position="20"/>
    </location>
</feature>
<feature type="sequence conflict" description="In Ref. 2; AAC47299." evidence="5" ref="2">
    <original>Y</original>
    <variation>S</variation>
    <location>
        <position position="71"/>
    </location>
</feature>
<feature type="sequence conflict" description="In Ref. 2; AAC47299." evidence="5" ref="2">
    <original>K</original>
    <variation>N</variation>
    <location>
        <position position="123"/>
    </location>
</feature>
<sequence>MSAAPTDAKSVKLVVVGDGAVGKTCLLICYTTNEFPKDYVPTVFDNYMAPMTVDGEPINLGLWDTAGQEDYEQLRPLSYPNTDLFLLCFSVISRTSFNNISSKWLPEIKHYEPKCKMMVVGTKTDCRNDEAMIRKLADENQKPITTEEGEKLAKDIKAICYMECSALTRSGLNQVFDEAIHIVLNKNQSSKKSSKKCALL</sequence>